<comment type="function">
    <text evidence="2">Induces differentiation and growth of neoplastic roots (hairy roots). Seems to function as a tyrosine phosphatase.</text>
</comment>
<comment type="catalytic activity">
    <reaction>
        <text>O-phospho-L-tyrosyl-[protein] + H2O = L-tyrosyl-[protein] + phosphate</text>
        <dbReference type="Rhea" id="RHEA:10684"/>
        <dbReference type="Rhea" id="RHEA-COMP:10136"/>
        <dbReference type="Rhea" id="RHEA-COMP:20101"/>
        <dbReference type="ChEBI" id="CHEBI:15377"/>
        <dbReference type="ChEBI" id="CHEBI:43474"/>
        <dbReference type="ChEBI" id="CHEBI:46858"/>
        <dbReference type="ChEBI" id="CHEBI:61978"/>
        <dbReference type="EC" id="3.1.3.48"/>
    </reaction>
</comment>
<comment type="caution">
    <text evidence="3">Was originally thought to release indoles from indoxyl-beta-glucosides.</text>
</comment>
<proteinExistence type="predicted"/>
<feature type="chain" id="PRO_0000097391" description="Protein-tyrosine phosphatase RolB">
    <location>
        <begin position="1"/>
        <end position="259"/>
    </location>
</feature>
<feature type="region of interest" description="Disordered" evidence="1">
    <location>
        <begin position="219"/>
        <end position="259"/>
    </location>
</feature>
<organism>
    <name type="scientific">Rhizobium rhizogenes</name>
    <name type="common">Agrobacterium rhizogenes</name>
    <dbReference type="NCBI Taxonomy" id="359"/>
    <lineage>
        <taxon>Bacteria</taxon>
        <taxon>Pseudomonadati</taxon>
        <taxon>Pseudomonadota</taxon>
        <taxon>Alphaproteobacteria</taxon>
        <taxon>Hyphomicrobiales</taxon>
        <taxon>Rhizobiaceae</taxon>
        <taxon>Rhizobium/Agrobacterium group</taxon>
        <taxon>Rhizobium</taxon>
    </lineage>
</organism>
<geneLocation type="plasmid">
    <name>pRiA4b</name>
</geneLocation>
<keyword id="KW-0378">Hydrolase</keyword>
<keyword id="KW-0614">Plasmid</keyword>
<keyword id="KW-0904">Protein phosphatase</keyword>
<accession>P20402</accession>
<reference key="1">
    <citation type="journal article" date="1986" name="Nature">
        <title>An Agrobacterium transformation in the evolution of the genus Nicotiana.</title>
        <authorList>
            <person name="Furner I.J."/>
            <person name="Huffman G.A."/>
            <person name="Amasino R.M."/>
            <person name="Garfinkel D.J."/>
            <person name="Gordon M.P."/>
            <person name="Nester E.W."/>
        </authorList>
    </citation>
    <scope>NUCLEOTIDE SEQUENCE [GENOMIC DNA]</scope>
    <source>
        <strain>A4</strain>
    </source>
</reference>
<reference key="2">
    <citation type="journal article" date="1991" name="EMBO J.">
        <title>The protein encoded by the rolB plant oncogene hydrolyses indole glucosides.</title>
        <authorList>
            <person name="Estruch J.J."/>
            <person name="Schell J."/>
            <person name="Spena A."/>
        </authorList>
    </citation>
    <scope>PRELIMINARY FUNCTION</scope>
</reference>
<reference key="3">
    <citation type="journal article" date="1996" name="Nature">
        <title>A plant oncogene as a phosphatase.</title>
        <authorList>
            <person name="Filippini F."/>
            <person name="Rossi V."/>
            <person name="Marin O."/>
            <person name="Trovato M."/>
            <person name="Constantino P."/>
            <person name="Downey P.M."/>
            <person name="Lo Schiavo F."/>
            <person name="Terzi M."/>
        </authorList>
    </citation>
    <scope>FUNCTION</scope>
</reference>
<sequence>MDPKLLFLPRFQPVDLTPAWSQINLFEGIRFAFAIYSRDYSKPLLHFQKRWALAVLDLKENSPPIYILKQLAELLKNKVCYHPPMFVSQPDLARENDQHVFVYLSREKMQKVLKEQSITFGMEAVLATTIQPYRSELALQEMLRVHNLAWPHSRTEEPDLECFIAIFASSLFIHLLELKVTNVYGREVACTFFLRRGTENRPYDVVACGTTQFTKNALGISRPAASSPEPDLTLRLSGPDQEGEEGVMKPAAVNLKKEA</sequence>
<gene>
    <name type="primary">rolB</name>
</gene>
<protein>
    <recommendedName>
        <fullName>Protein-tyrosine phosphatase RolB</fullName>
        <shortName>ROL B protein</shortName>
        <ecNumber>3.1.3.48</ecNumber>
    </recommendedName>
</protein>
<evidence type="ECO:0000256" key="1">
    <source>
        <dbReference type="SAM" id="MobiDB-lite"/>
    </source>
</evidence>
<evidence type="ECO:0000269" key="2">
    <source>
    </source>
</evidence>
<evidence type="ECO:0000305" key="3">
    <source>
    </source>
</evidence>
<dbReference type="EC" id="3.1.3.48"/>
<dbReference type="EMBL" id="X03433">
    <property type="protein sequence ID" value="CAA27163.1"/>
    <property type="molecule type" value="Genomic_DNA"/>
</dbReference>
<dbReference type="PIR" id="A27259">
    <property type="entry name" value="A27259"/>
</dbReference>
<dbReference type="GO" id="GO:0004725">
    <property type="term" value="F:protein tyrosine phosphatase activity"/>
    <property type="evidence" value="ECO:0007669"/>
    <property type="project" value="UniProtKB-EC"/>
</dbReference>
<dbReference type="InterPro" id="IPR006064">
    <property type="entry name" value="Glycosidase"/>
</dbReference>
<dbReference type="Pfam" id="PF02027">
    <property type="entry name" value="RolB_RolC"/>
    <property type="match status" value="1"/>
</dbReference>
<name>ROB1_RHIRH</name>